<evidence type="ECO:0000255" key="1"/>
<evidence type="ECO:0000305" key="2"/>
<dbReference type="EMBL" id="L02122">
    <property type="protein sequence ID" value="AAD15041.1"/>
    <property type="molecule type" value="Genomic_DNA"/>
</dbReference>
<dbReference type="EMBL" id="M87049">
    <property type="protein sequence ID" value="AAA67615.1"/>
    <property type="molecule type" value="Genomic_DNA"/>
</dbReference>
<dbReference type="EMBL" id="U00096">
    <property type="protein sequence ID" value="AAT48220.1"/>
    <property type="molecule type" value="Genomic_DNA"/>
</dbReference>
<dbReference type="EMBL" id="AP009048">
    <property type="protein sequence ID" value="BAE77482.1"/>
    <property type="molecule type" value="Genomic_DNA"/>
</dbReference>
<dbReference type="PIR" id="S30709">
    <property type="entry name" value="S30709"/>
</dbReference>
<dbReference type="PIR" id="S30746">
    <property type="entry name" value="S30746"/>
</dbReference>
<dbReference type="RefSeq" id="WP_000339104.1">
    <property type="nucleotide sequence ID" value="NZ_STEB01000021.1"/>
</dbReference>
<dbReference type="RefSeq" id="YP_026262.1">
    <property type="nucleotide sequence ID" value="NC_000913.3"/>
</dbReference>
<dbReference type="SMR" id="P27844"/>
<dbReference type="BioGRID" id="4261790">
    <property type="interactions" value="13"/>
</dbReference>
<dbReference type="FunCoup" id="P27844">
    <property type="interactions" value="199"/>
</dbReference>
<dbReference type="IntAct" id="P27844">
    <property type="interactions" value="1"/>
</dbReference>
<dbReference type="STRING" id="511145.b3819"/>
<dbReference type="TCDB" id="2.A.7.7.2">
    <property type="family name" value="the drug/metabolite transporter (dmt) superfamily"/>
</dbReference>
<dbReference type="PaxDb" id="511145-b3819"/>
<dbReference type="EnsemblBacteria" id="AAT48220">
    <property type="protein sequence ID" value="AAT48220"/>
    <property type="gene ID" value="b3819"/>
</dbReference>
<dbReference type="GeneID" id="948330"/>
<dbReference type="KEGG" id="ecj:JW5589"/>
<dbReference type="KEGG" id="eco:b3819"/>
<dbReference type="KEGG" id="ecoc:C3026_20670"/>
<dbReference type="PATRIC" id="fig|1411691.4.peg.2888"/>
<dbReference type="EchoBASE" id="EB1434"/>
<dbReference type="eggNOG" id="COG2962">
    <property type="taxonomic scope" value="Bacteria"/>
</dbReference>
<dbReference type="HOGENOM" id="CLU_054508_1_0_6"/>
<dbReference type="InParanoid" id="P27844"/>
<dbReference type="OMA" id="HRMVWSL"/>
<dbReference type="OrthoDB" id="369870at2"/>
<dbReference type="PhylomeDB" id="P27844"/>
<dbReference type="BioCyc" id="EcoCyc:EG11466-MONOMER"/>
<dbReference type="PRO" id="PR:P27844"/>
<dbReference type="Proteomes" id="UP000000625">
    <property type="component" value="Chromosome"/>
</dbReference>
<dbReference type="GO" id="GO:0016020">
    <property type="term" value="C:membrane"/>
    <property type="evidence" value="ECO:0000314"/>
    <property type="project" value="EcoCyc"/>
</dbReference>
<dbReference type="GO" id="GO:0005886">
    <property type="term" value="C:plasma membrane"/>
    <property type="evidence" value="ECO:0000314"/>
    <property type="project" value="EcoCyc"/>
</dbReference>
<dbReference type="InterPro" id="IPR000620">
    <property type="entry name" value="EamA_dom"/>
</dbReference>
<dbReference type="InterPro" id="IPR004626">
    <property type="entry name" value="RarD"/>
</dbReference>
<dbReference type="NCBIfam" id="NF011959">
    <property type="entry name" value="PRK15430.1"/>
    <property type="match status" value="1"/>
</dbReference>
<dbReference type="NCBIfam" id="TIGR00688">
    <property type="entry name" value="rarD"/>
    <property type="match status" value="1"/>
</dbReference>
<dbReference type="PANTHER" id="PTHR22911">
    <property type="entry name" value="ACYL-MALONYL CONDENSING ENZYME-RELATED"/>
    <property type="match status" value="1"/>
</dbReference>
<dbReference type="PANTHER" id="PTHR22911:SF137">
    <property type="entry name" value="SOLUTE CARRIER FAMILY 35 MEMBER G2-RELATED"/>
    <property type="match status" value="1"/>
</dbReference>
<dbReference type="Pfam" id="PF00892">
    <property type="entry name" value="EamA"/>
    <property type="match status" value="2"/>
</dbReference>
<dbReference type="SUPFAM" id="SSF103481">
    <property type="entry name" value="Multidrug resistance efflux transporter EmrE"/>
    <property type="match status" value="2"/>
</dbReference>
<feature type="chain" id="PRO_0000108152" description="Protein RarD">
    <location>
        <begin position="1"/>
        <end position="296"/>
    </location>
</feature>
<feature type="topological domain" description="Cytoplasmic" evidence="1">
    <location>
        <begin position="1"/>
        <end position="11"/>
    </location>
</feature>
<feature type="transmembrane region" description="Helical" evidence="1">
    <location>
        <begin position="12"/>
        <end position="34"/>
    </location>
</feature>
<feature type="topological domain" description="Periplasmic" evidence="1">
    <location>
        <begin position="35"/>
        <end position="37"/>
    </location>
</feature>
<feature type="transmembrane region" description="Helical" evidence="1">
    <location>
        <begin position="38"/>
        <end position="60"/>
    </location>
</feature>
<feature type="topological domain" description="Cytoplasmic" evidence="1">
    <location>
        <begin position="61"/>
        <end position="72"/>
    </location>
</feature>
<feature type="transmembrane region" description="Helical" evidence="1">
    <location>
        <begin position="73"/>
        <end position="95"/>
    </location>
</feature>
<feature type="topological domain" description="Periplasmic" evidence="1">
    <location>
        <begin position="96"/>
        <end position="99"/>
    </location>
</feature>
<feature type="transmembrane region" description="Helical" evidence="1">
    <location>
        <begin position="100"/>
        <end position="122"/>
    </location>
</feature>
<feature type="topological domain" description="Cytoplasmic" evidence="1">
    <location>
        <begin position="123"/>
        <end position="128"/>
    </location>
</feature>
<feature type="transmembrane region" description="Helical" evidence="1">
    <location>
        <begin position="129"/>
        <end position="146"/>
    </location>
</feature>
<feature type="topological domain" description="Periplasmic" evidence="1">
    <location>
        <begin position="147"/>
        <end position="149"/>
    </location>
</feature>
<feature type="transmembrane region" description="Helical" evidence="1">
    <location>
        <begin position="150"/>
        <end position="167"/>
    </location>
</feature>
<feature type="topological domain" description="Cytoplasmic" evidence="1">
    <location>
        <begin position="168"/>
        <end position="179"/>
    </location>
</feature>
<feature type="transmembrane region" description="Helical" evidence="1">
    <location>
        <begin position="180"/>
        <end position="197"/>
    </location>
</feature>
<feature type="topological domain" description="Periplasmic" evidence="1">
    <location>
        <begin position="198"/>
        <end position="211"/>
    </location>
</feature>
<feature type="transmembrane region" description="Helical" evidence="1">
    <location>
        <begin position="212"/>
        <end position="234"/>
    </location>
</feature>
<feature type="topological domain" description="Cytoplasmic" evidence="1">
    <location>
        <begin position="235"/>
        <end position="238"/>
    </location>
</feature>
<feature type="transmembrane region" description="Helical" evidence="1">
    <location>
        <begin position="239"/>
        <end position="261"/>
    </location>
</feature>
<feature type="topological domain" description="Periplasmic" evidence="1">
    <location>
        <begin position="262"/>
        <end position="270"/>
    </location>
</feature>
<feature type="transmembrane region" description="Helical" evidence="1">
    <location>
        <begin position="271"/>
        <end position="290"/>
    </location>
</feature>
<feature type="topological domain" description="Cytoplasmic" evidence="1">
    <location>
        <begin position="291"/>
        <end position="296"/>
    </location>
</feature>
<feature type="domain" description="EamA">
    <location>
        <begin position="18"/>
        <end position="145"/>
    </location>
</feature>
<feature type="sequence conflict" description="In Ref. 2; AAA67615." evidence="2" ref="2">
    <original>A</original>
    <variation>R</variation>
    <location>
        <position position="102"/>
    </location>
</feature>
<feature type="sequence conflict" description="In Ref. 2; AAA67615." evidence="2" ref="2">
    <original>ER</original>
    <variation>DG</variation>
    <location>
        <begin position="123"/>
        <end position="124"/>
    </location>
</feature>
<name>RARD_ECOLI</name>
<accession>P27844</accession>
<accession>Q2M8C4</accession>
<keyword id="KW-0997">Cell inner membrane</keyword>
<keyword id="KW-1003">Cell membrane</keyword>
<keyword id="KW-0472">Membrane</keyword>
<keyword id="KW-1185">Reference proteome</keyword>
<keyword id="KW-0812">Transmembrane</keyword>
<keyword id="KW-1133">Transmembrane helix</keyword>
<keyword id="KW-0813">Transport</keyword>
<protein>
    <recommendedName>
        <fullName>Protein RarD</fullName>
    </recommendedName>
</protein>
<reference key="1">
    <citation type="submission" date="1993-01" db="EMBL/GenBank/DDBJ databases">
        <authorList>
            <person name="Ohmori H."/>
        </authorList>
    </citation>
    <scope>NUCLEOTIDE SEQUENCE [GENOMIC DNA]</scope>
    <source>
        <strain>K12</strain>
    </source>
</reference>
<reference key="2">
    <citation type="journal article" date="1992" name="Science">
        <title>Analysis of the Escherichia coli genome: DNA sequence of the region from 84.5 to 86.5 minutes.</title>
        <authorList>
            <person name="Daniels D.L."/>
            <person name="Plunkett G. III"/>
            <person name="Burland V.D."/>
            <person name="Blattner F.R."/>
        </authorList>
    </citation>
    <scope>NUCLEOTIDE SEQUENCE [LARGE SCALE GENOMIC DNA]</scope>
    <source>
        <strain>K12 / MG1655 / ATCC 47076</strain>
    </source>
</reference>
<reference key="3">
    <citation type="journal article" date="1997" name="Science">
        <title>The complete genome sequence of Escherichia coli K-12.</title>
        <authorList>
            <person name="Blattner F.R."/>
            <person name="Plunkett G. III"/>
            <person name="Bloch C.A."/>
            <person name="Perna N.T."/>
            <person name="Burland V."/>
            <person name="Riley M."/>
            <person name="Collado-Vides J."/>
            <person name="Glasner J.D."/>
            <person name="Rode C.K."/>
            <person name="Mayhew G.F."/>
            <person name="Gregor J."/>
            <person name="Davis N.W."/>
            <person name="Kirkpatrick H.A."/>
            <person name="Goeden M.A."/>
            <person name="Rose D.J."/>
            <person name="Mau B."/>
            <person name="Shao Y."/>
        </authorList>
    </citation>
    <scope>NUCLEOTIDE SEQUENCE [LARGE SCALE GENOMIC DNA]</scope>
    <source>
        <strain>K12 / MG1655 / ATCC 47076</strain>
    </source>
</reference>
<reference key="4">
    <citation type="journal article" date="2006" name="Nucleic Acids Res.">
        <title>Escherichia coli K-12: a cooperatively developed annotation snapshot -- 2005.</title>
        <authorList>
            <person name="Riley M."/>
            <person name="Abe T."/>
            <person name="Arnaud M.B."/>
            <person name="Berlyn M.K.B."/>
            <person name="Blattner F.R."/>
            <person name="Chaudhuri R.R."/>
            <person name="Glasner J.D."/>
            <person name="Horiuchi T."/>
            <person name="Keseler I.M."/>
            <person name="Kosuge T."/>
            <person name="Mori H."/>
            <person name="Perna N.T."/>
            <person name="Plunkett G. III"/>
            <person name="Rudd K.E."/>
            <person name="Serres M.H."/>
            <person name="Thomas G.H."/>
            <person name="Thomson N.R."/>
            <person name="Wishart D."/>
            <person name="Wanner B.L."/>
        </authorList>
    </citation>
    <scope>SEQUENCE REVISION</scope>
</reference>
<reference key="5">
    <citation type="journal article" date="2006" name="Mol. Syst. Biol.">
        <title>Highly accurate genome sequences of Escherichia coli K-12 strains MG1655 and W3110.</title>
        <authorList>
            <person name="Hayashi K."/>
            <person name="Morooka N."/>
            <person name="Yamamoto Y."/>
            <person name="Fujita K."/>
            <person name="Isono K."/>
            <person name="Choi S."/>
            <person name="Ohtsubo E."/>
            <person name="Baba T."/>
            <person name="Wanner B.L."/>
            <person name="Mori H."/>
            <person name="Horiuchi T."/>
        </authorList>
    </citation>
    <scope>NUCLEOTIDE SEQUENCE [LARGE SCALE GENOMIC DNA]</scope>
    <source>
        <strain>K12 / W3110 / ATCC 27325 / DSM 5911</strain>
    </source>
</reference>
<reference key="6">
    <citation type="journal article" date="2005" name="Science">
        <title>Global topology analysis of the Escherichia coli inner membrane proteome.</title>
        <authorList>
            <person name="Daley D.O."/>
            <person name="Rapp M."/>
            <person name="Granseth E."/>
            <person name="Melen K."/>
            <person name="Drew D."/>
            <person name="von Heijne G."/>
        </authorList>
    </citation>
    <scope>TOPOLOGY [LARGE SCALE ANALYSIS]</scope>
    <source>
        <strain>K12 / MG1655 / ATCC 47076</strain>
    </source>
</reference>
<comment type="subcellular location">
    <subcellularLocation>
        <location>Cell inner membrane</location>
        <topology>Multi-pass membrane protein</topology>
    </subcellularLocation>
</comment>
<comment type="similarity">
    <text evidence="2">Belongs to the EamA transporter family.</text>
</comment>
<sequence>MDAKQTRQGVLLALAAYFIWGIAPAYFKLIYYVPADEILTHRVIWSFFFMVVLMSICRQWSYLKTLIQTPQKIFMLAVSAVLIGGNWLLFIWAVNNHHMLEASLGYFINPLVNIVLGMIFLGERFRRMQWLAVILAICGVLVQLWTFGSLPIIALGLAFSFAFYGLVRKKIAVEAQTGMLIETMWLLPVAAIYLFAIADSSTSHMGQNPMSLNLLLIAAGIVTTVPLLCFTAAATRLRLSTLGFFQYIGPTLMFLLAVTFYGEKPGADKMVTFAFIWVALAIFVMDAIYTQRRTSK</sequence>
<gene>
    <name type="primary">rarD</name>
    <name type="ordered locus">b3819</name>
    <name type="ordered locus">JW5589</name>
</gene>
<organism>
    <name type="scientific">Escherichia coli (strain K12)</name>
    <dbReference type="NCBI Taxonomy" id="83333"/>
    <lineage>
        <taxon>Bacteria</taxon>
        <taxon>Pseudomonadati</taxon>
        <taxon>Pseudomonadota</taxon>
        <taxon>Gammaproteobacteria</taxon>
        <taxon>Enterobacterales</taxon>
        <taxon>Enterobacteriaceae</taxon>
        <taxon>Escherichia</taxon>
    </lineage>
</organism>
<proteinExistence type="evidence at protein level"/>